<name>HCY1_HOMAM</name>
<feature type="chain" id="PRO_0000204272" description="Hemocyanin subunit 1">
    <location>
        <begin position="1"/>
        <end position="31" status="greater than"/>
    </location>
</feature>
<feature type="non-terminal residue" evidence="1">
    <location>
        <position position="31"/>
    </location>
</feature>
<protein>
    <recommendedName>
        <fullName>Hemocyanin subunit 1</fullName>
    </recommendedName>
</protein>
<organism evidence="1">
    <name type="scientific">Homarus americanus</name>
    <name type="common">American lobster</name>
    <dbReference type="NCBI Taxonomy" id="6706"/>
    <lineage>
        <taxon>Eukaryota</taxon>
        <taxon>Metazoa</taxon>
        <taxon>Ecdysozoa</taxon>
        <taxon>Arthropoda</taxon>
        <taxon>Crustacea</taxon>
        <taxon>Multicrustacea</taxon>
        <taxon>Malacostraca</taxon>
        <taxon>Eumalacostraca</taxon>
        <taxon>Eucarida</taxon>
        <taxon>Decapoda</taxon>
        <taxon>Pleocyemata</taxon>
        <taxon>Astacidea</taxon>
        <taxon>Nephropoidea</taxon>
        <taxon>Nephropidae</taxon>
        <taxon>Homarus</taxon>
    </lineage>
</organism>
<evidence type="ECO:0000305" key="1"/>
<comment type="function">
    <text>Hemocyanins are copper-containing oxygen carriers occurring freely dissolved in the hemolymph of many mollusks and arthropods.</text>
</comment>
<comment type="subcellular location">
    <subcellularLocation>
        <location>Secreted</location>
        <location>Extracellular space</location>
    </subcellularLocation>
</comment>
<comment type="tissue specificity">
    <text>Hemolymph.</text>
</comment>
<comment type="similarity">
    <text evidence="1">Belongs to the tyrosinase family. Hemocyanin subfamily.</text>
</comment>
<dbReference type="GO" id="GO:0005576">
    <property type="term" value="C:extracellular region"/>
    <property type="evidence" value="ECO:0007669"/>
    <property type="project" value="UniProtKB-SubCell"/>
</dbReference>
<dbReference type="GO" id="GO:0005344">
    <property type="term" value="F:oxygen carrier activity"/>
    <property type="evidence" value="ECO:0007669"/>
    <property type="project" value="UniProtKB-KW"/>
</dbReference>
<keyword id="KW-0186">Copper</keyword>
<keyword id="KW-0903">Direct protein sequencing</keyword>
<keyword id="KW-0561">Oxygen transport</keyword>
<keyword id="KW-0964">Secreted</keyword>
<keyword id="KW-0813">Transport</keyword>
<sequence length="31" mass="3516">GTTVVAHKQQSVNRLLYKVTSHIPDTFFSLK</sequence>
<proteinExistence type="evidence at protein level"/>
<reference evidence="1" key="1">
    <citation type="journal article" date="1999" name="Comp. Biochem. Physiol.">
        <title>Subunit composition and N-terminal analysis of arthropod hemocyanins.</title>
        <authorList>
            <person name="Stoeva S."/>
            <person name="Dolashka P."/>
            <person name="Hristova R."/>
            <person name="Genov N."/>
            <person name="Voelter W."/>
        </authorList>
    </citation>
    <scope>PROTEIN SEQUENCE</scope>
</reference>
<accession>P82296</accession>